<gene>
    <name evidence="1" type="primary">ydiU</name>
    <name evidence="1" type="synonym">selO</name>
    <name type="ordered locus">CLK_0634</name>
</gene>
<sequence length="491" mass="55192">MKERKVIIKTGLNLENSYASLPEIFFTRQSPSRIPSPKLAVLNYPLITSLELNAQVLQSADGVDILAGNKTPEEAIPLAQAYAGHQFGHFTMLGDGRALLLGEHITPLGDRFDIQLKGSGKTPYSRGGDGKAALGPMLREYIISEAMNALGIPTTRSLAVVTTGESIIRETKLPGAILTRVAASHIRVGTFEYVSRWGTVEELRALADYTLQRHFKEGYDKENPYLFLLQEVIKKQAELIAKWQLVGFVHGVMNTDNMTISGETIDYGPCAFMDVYDPETVFSSIDIYGRYAYGNQPNIAAWNLARFAETLLPLLNIDPNEAIKIAENAISDFTKLYKNNWLSGMRAKLGVFNQELEDEYLIEDLLSIMNKYGSDYTNTFRTLTSGNIEDTVLLGKMEFDKWYKLWQERLTRQEESRLSSKQLMKSSNPSVIPRNHRVEEALEAAVKEGDYSVMEKLLDALSKPYAYSKEQDYYSKLPEPSTCPYQTYCGT</sequence>
<reference key="1">
    <citation type="journal article" date="2007" name="PLoS ONE">
        <title>Analysis of the neurotoxin complex genes in Clostridium botulinum A1-A4 and B1 strains: BoNT/A3, /Ba4 and /B1 clusters are located within plasmids.</title>
        <authorList>
            <person name="Smith T.J."/>
            <person name="Hill K.K."/>
            <person name="Foley B.T."/>
            <person name="Detter J.C."/>
            <person name="Munk A.C."/>
            <person name="Bruce D.C."/>
            <person name="Doggett N.A."/>
            <person name="Smith L.A."/>
            <person name="Marks J.D."/>
            <person name="Xie G."/>
            <person name="Brettin T.S."/>
        </authorList>
    </citation>
    <scope>NUCLEOTIDE SEQUENCE [LARGE SCALE GENOMIC DNA]</scope>
    <source>
        <strain>Loch Maree / Type A3</strain>
    </source>
</reference>
<keyword id="KW-0067">ATP-binding</keyword>
<keyword id="KW-0460">Magnesium</keyword>
<keyword id="KW-0464">Manganese</keyword>
<keyword id="KW-0479">Metal-binding</keyword>
<keyword id="KW-0547">Nucleotide-binding</keyword>
<keyword id="KW-0548">Nucleotidyltransferase</keyword>
<keyword id="KW-0808">Transferase</keyword>
<name>SELO_CLOBM</name>
<protein>
    <recommendedName>
        <fullName evidence="1">Protein nucleotidyltransferase YdiU</fullName>
        <ecNumber evidence="1">2.7.7.-</ecNumber>
    </recommendedName>
    <alternativeName>
        <fullName evidence="1">Protein adenylyltransferase YdiU</fullName>
        <ecNumber evidence="1">2.7.7.108</ecNumber>
    </alternativeName>
    <alternativeName>
        <fullName evidence="1">Protein uridylyltransferase YdiU</fullName>
        <ecNumber evidence="1">2.7.7.-</ecNumber>
    </alternativeName>
</protein>
<accession>B1KZF5</accession>
<organism>
    <name type="scientific">Clostridium botulinum (strain Loch Maree / Type A3)</name>
    <dbReference type="NCBI Taxonomy" id="498214"/>
    <lineage>
        <taxon>Bacteria</taxon>
        <taxon>Bacillati</taxon>
        <taxon>Bacillota</taxon>
        <taxon>Clostridia</taxon>
        <taxon>Eubacteriales</taxon>
        <taxon>Clostridiaceae</taxon>
        <taxon>Clostridium</taxon>
    </lineage>
</organism>
<evidence type="ECO:0000255" key="1">
    <source>
        <dbReference type="HAMAP-Rule" id="MF_00692"/>
    </source>
</evidence>
<dbReference type="EC" id="2.7.7.-" evidence="1"/>
<dbReference type="EC" id="2.7.7.108" evidence="1"/>
<dbReference type="EMBL" id="CP000962">
    <property type="protein sequence ID" value="ACA55476.1"/>
    <property type="molecule type" value="Genomic_DNA"/>
</dbReference>
<dbReference type="RefSeq" id="WP_012343451.1">
    <property type="nucleotide sequence ID" value="NC_010520.1"/>
</dbReference>
<dbReference type="SMR" id="B1KZF5"/>
<dbReference type="KEGG" id="cbl:CLK_0634"/>
<dbReference type="HOGENOM" id="CLU_010245_4_1_9"/>
<dbReference type="GO" id="GO:0070733">
    <property type="term" value="F:AMPylase activity"/>
    <property type="evidence" value="ECO:0007669"/>
    <property type="project" value="RHEA"/>
</dbReference>
<dbReference type="GO" id="GO:0005524">
    <property type="term" value="F:ATP binding"/>
    <property type="evidence" value="ECO:0007669"/>
    <property type="project" value="UniProtKB-UniRule"/>
</dbReference>
<dbReference type="GO" id="GO:0000287">
    <property type="term" value="F:magnesium ion binding"/>
    <property type="evidence" value="ECO:0007669"/>
    <property type="project" value="UniProtKB-UniRule"/>
</dbReference>
<dbReference type="HAMAP" id="MF_00692">
    <property type="entry name" value="YdiU_SelO"/>
    <property type="match status" value="1"/>
</dbReference>
<dbReference type="InterPro" id="IPR003846">
    <property type="entry name" value="SelO"/>
</dbReference>
<dbReference type="NCBIfam" id="NF000658">
    <property type="entry name" value="PRK00029.1"/>
    <property type="match status" value="1"/>
</dbReference>
<dbReference type="PANTHER" id="PTHR12153:SF15">
    <property type="entry name" value="PROTEIN ADENYLYLTRANSFERASE SELO, MITOCHONDRIAL"/>
    <property type="match status" value="1"/>
</dbReference>
<dbReference type="PANTHER" id="PTHR12153">
    <property type="entry name" value="SELENOPROTEIN O"/>
    <property type="match status" value="1"/>
</dbReference>
<dbReference type="Pfam" id="PF02696">
    <property type="entry name" value="SelO"/>
    <property type="match status" value="1"/>
</dbReference>
<feature type="chain" id="PRO_1000132104" description="Protein nucleotidyltransferase YdiU">
    <location>
        <begin position="1"/>
        <end position="491"/>
    </location>
</feature>
<feature type="active site" description="Proton acceptor" evidence="1">
    <location>
        <position position="256"/>
    </location>
</feature>
<feature type="binding site" evidence="1">
    <location>
        <position position="94"/>
    </location>
    <ligand>
        <name>ATP</name>
        <dbReference type="ChEBI" id="CHEBI:30616"/>
    </ligand>
</feature>
<feature type="binding site" evidence="1">
    <location>
        <position position="96"/>
    </location>
    <ligand>
        <name>ATP</name>
        <dbReference type="ChEBI" id="CHEBI:30616"/>
    </ligand>
</feature>
<feature type="binding site" evidence="1">
    <location>
        <position position="97"/>
    </location>
    <ligand>
        <name>ATP</name>
        <dbReference type="ChEBI" id="CHEBI:30616"/>
    </ligand>
</feature>
<feature type="binding site" evidence="1">
    <location>
        <position position="117"/>
    </location>
    <ligand>
        <name>ATP</name>
        <dbReference type="ChEBI" id="CHEBI:30616"/>
    </ligand>
</feature>
<feature type="binding site" evidence="1">
    <location>
        <position position="129"/>
    </location>
    <ligand>
        <name>ATP</name>
        <dbReference type="ChEBI" id="CHEBI:30616"/>
    </ligand>
</feature>
<feature type="binding site" evidence="1">
    <location>
        <position position="130"/>
    </location>
    <ligand>
        <name>ATP</name>
        <dbReference type="ChEBI" id="CHEBI:30616"/>
    </ligand>
</feature>
<feature type="binding site" evidence="1">
    <location>
        <position position="180"/>
    </location>
    <ligand>
        <name>ATP</name>
        <dbReference type="ChEBI" id="CHEBI:30616"/>
    </ligand>
</feature>
<feature type="binding site" evidence="1">
    <location>
        <position position="187"/>
    </location>
    <ligand>
        <name>ATP</name>
        <dbReference type="ChEBI" id="CHEBI:30616"/>
    </ligand>
</feature>
<feature type="binding site" evidence="1">
    <location>
        <position position="257"/>
    </location>
    <ligand>
        <name>Mg(2+)</name>
        <dbReference type="ChEBI" id="CHEBI:18420"/>
    </ligand>
</feature>
<feature type="binding site" evidence="1">
    <location>
        <position position="266"/>
    </location>
    <ligand>
        <name>ATP</name>
        <dbReference type="ChEBI" id="CHEBI:30616"/>
    </ligand>
</feature>
<feature type="binding site" evidence="1">
    <location>
        <position position="266"/>
    </location>
    <ligand>
        <name>Mg(2+)</name>
        <dbReference type="ChEBI" id="CHEBI:18420"/>
    </ligand>
</feature>
<comment type="function">
    <text evidence="1">Nucleotidyltransferase involved in the post-translational modification of proteins. It can catalyze the addition of adenosine monophosphate (AMP) or uridine monophosphate (UMP) to a protein, resulting in modifications known as AMPylation and UMPylation.</text>
</comment>
<comment type="catalytic activity">
    <reaction evidence="1">
        <text>L-seryl-[protein] + ATP = 3-O-(5'-adenylyl)-L-seryl-[protein] + diphosphate</text>
        <dbReference type="Rhea" id="RHEA:58120"/>
        <dbReference type="Rhea" id="RHEA-COMP:9863"/>
        <dbReference type="Rhea" id="RHEA-COMP:15073"/>
        <dbReference type="ChEBI" id="CHEBI:29999"/>
        <dbReference type="ChEBI" id="CHEBI:30616"/>
        <dbReference type="ChEBI" id="CHEBI:33019"/>
        <dbReference type="ChEBI" id="CHEBI:142516"/>
        <dbReference type="EC" id="2.7.7.108"/>
    </reaction>
</comment>
<comment type="catalytic activity">
    <reaction evidence="1">
        <text>L-threonyl-[protein] + ATP = 3-O-(5'-adenylyl)-L-threonyl-[protein] + diphosphate</text>
        <dbReference type="Rhea" id="RHEA:54292"/>
        <dbReference type="Rhea" id="RHEA-COMP:11060"/>
        <dbReference type="Rhea" id="RHEA-COMP:13847"/>
        <dbReference type="ChEBI" id="CHEBI:30013"/>
        <dbReference type="ChEBI" id="CHEBI:30616"/>
        <dbReference type="ChEBI" id="CHEBI:33019"/>
        <dbReference type="ChEBI" id="CHEBI:138113"/>
        <dbReference type="EC" id="2.7.7.108"/>
    </reaction>
</comment>
<comment type="catalytic activity">
    <reaction evidence="1">
        <text>L-tyrosyl-[protein] + ATP = O-(5'-adenylyl)-L-tyrosyl-[protein] + diphosphate</text>
        <dbReference type="Rhea" id="RHEA:54288"/>
        <dbReference type="Rhea" id="RHEA-COMP:10136"/>
        <dbReference type="Rhea" id="RHEA-COMP:13846"/>
        <dbReference type="ChEBI" id="CHEBI:30616"/>
        <dbReference type="ChEBI" id="CHEBI:33019"/>
        <dbReference type="ChEBI" id="CHEBI:46858"/>
        <dbReference type="ChEBI" id="CHEBI:83624"/>
        <dbReference type="EC" id="2.7.7.108"/>
    </reaction>
</comment>
<comment type="catalytic activity">
    <reaction evidence="1">
        <text>L-histidyl-[protein] + UTP = N(tele)-(5'-uridylyl)-L-histidyl-[protein] + diphosphate</text>
        <dbReference type="Rhea" id="RHEA:83891"/>
        <dbReference type="Rhea" id="RHEA-COMP:9745"/>
        <dbReference type="Rhea" id="RHEA-COMP:20239"/>
        <dbReference type="ChEBI" id="CHEBI:29979"/>
        <dbReference type="ChEBI" id="CHEBI:33019"/>
        <dbReference type="ChEBI" id="CHEBI:46398"/>
        <dbReference type="ChEBI" id="CHEBI:233474"/>
    </reaction>
</comment>
<comment type="catalytic activity">
    <reaction evidence="1">
        <text>L-seryl-[protein] + UTP = O-(5'-uridylyl)-L-seryl-[protein] + diphosphate</text>
        <dbReference type="Rhea" id="RHEA:64604"/>
        <dbReference type="Rhea" id="RHEA-COMP:9863"/>
        <dbReference type="Rhea" id="RHEA-COMP:16635"/>
        <dbReference type="ChEBI" id="CHEBI:29999"/>
        <dbReference type="ChEBI" id="CHEBI:33019"/>
        <dbReference type="ChEBI" id="CHEBI:46398"/>
        <dbReference type="ChEBI" id="CHEBI:156051"/>
    </reaction>
</comment>
<comment type="catalytic activity">
    <reaction evidence="1">
        <text>L-tyrosyl-[protein] + UTP = O-(5'-uridylyl)-L-tyrosyl-[protein] + diphosphate</text>
        <dbReference type="Rhea" id="RHEA:83887"/>
        <dbReference type="Rhea" id="RHEA-COMP:10136"/>
        <dbReference type="Rhea" id="RHEA-COMP:20238"/>
        <dbReference type="ChEBI" id="CHEBI:33019"/>
        <dbReference type="ChEBI" id="CHEBI:46398"/>
        <dbReference type="ChEBI" id="CHEBI:46858"/>
        <dbReference type="ChEBI" id="CHEBI:90602"/>
    </reaction>
</comment>
<comment type="cofactor">
    <cofactor evidence="1">
        <name>Mg(2+)</name>
        <dbReference type="ChEBI" id="CHEBI:18420"/>
    </cofactor>
    <cofactor evidence="1">
        <name>Mn(2+)</name>
        <dbReference type="ChEBI" id="CHEBI:29035"/>
    </cofactor>
</comment>
<comment type="similarity">
    <text evidence="1">Belongs to the SELO family.</text>
</comment>
<proteinExistence type="inferred from homology"/>